<feature type="chain" id="PRO_0000340411" description="Urease accessory protein UreD">
    <location>
        <begin position="1"/>
        <end position="271"/>
    </location>
</feature>
<sequence>MAGAPRRQRAVGRVRLGVNAIAGKSRVSDVAEAGSLRVRMPRVDGPAVEGVLVNTAGGVACGDHFTIEVKAEAGAHAVVATPAAEKIYRSDGETARIDVAITVEAGAQVDWLPQETLLYDAARLARRFTVDLAPDATFLAFEAIAFGRVARGEEMRTGHLEDHWQVTRGGGLIYADAVRVSGPLGELLRRPTVAAGNRAWATLLYVAPDAEARLDEARALMESARSECGASAWNGLLAARWLAPDIETLRRDAVAFLNAFRGAPLPRVWAL</sequence>
<protein>
    <recommendedName>
        <fullName evidence="1">Urease accessory protein UreD</fullName>
    </recommendedName>
</protein>
<organism>
    <name type="scientific">Azorhizobium caulinodans (strain ATCC 43989 / DSM 5975 / JCM 20966 / LMG 6465 / NBRC 14845 / NCIMB 13405 / ORS 571)</name>
    <dbReference type="NCBI Taxonomy" id="438753"/>
    <lineage>
        <taxon>Bacteria</taxon>
        <taxon>Pseudomonadati</taxon>
        <taxon>Pseudomonadota</taxon>
        <taxon>Alphaproteobacteria</taxon>
        <taxon>Hyphomicrobiales</taxon>
        <taxon>Xanthobacteraceae</taxon>
        <taxon>Azorhizobium</taxon>
    </lineage>
</organism>
<keyword id="KW-0143">Chaperone</keyword>
<keyword id="KW-0963">Cytoplasm</keyword>
<keyword id="KW-0996">Nickel insertion</keyword>
<keyword id="KW-1185">Reference proteome</keyword>
<reference key="1">
    <citation type="submission" date="2007-04" db="EMBL/GenBank/DDBJ databases">
        <title>Complete genome sequence of the nitrogen-fixing bacterium Azorhizobium caulinodans ORS571.</title>
        <authorList>
            <person name="Lee K.B."/>
            <person name="Backer P.D."/>
            <person name="Aono T."/>
            <person name="Liu C.T."/>
            <person name="Suzuki S."/>
            <person name="Suzuki T."/>
            <person name="Kaneko T."/>
            <person name="Yamada M."/>
            <person name="Tabata S."/>
            <person name="Kupfer D.M."/>
            <person name="Najar F.Z."/>
            <person name="Wiley G.B."/>
            <person name="Roe B."/>
            <person name="Binnewies T."/>
            <person name="Ussery D."/>
            <person name="Vereecke D."/>
            <person name="Gevers D."/>
            <person name="Holsters M."/>
            <person name="Oyaizu H."/>
        </authorList>
    </citation>
    <scope>NUCLEOTIDE SEQUENCE [LARGE SCALE GENOMIC DNA]</scope>
    <source>
        <strain>ATCC 43989 / DSM 5975 / JCM 20966 / LMG 6465 / NBRC 14845 / NCIMB 13405 / ORS 571</strain>
    </source>
</reference>
<comment type="function">
    <text evidence="1">Required for maturation of urease via the functional incorporation of the urease nickel metallocenter.</text>
</comment>
<comment type="subunit">
    <text evidence="1">UreD, UreF and UreG form a complex that acts as a GTP-hydrolysis-dependent molecular chaperone, activating the urease apoprotein by helping to assemble the nickel containing metallocenter of UreC. The UreE protein probably delivers the nickel.</text>
</comment>
<comment type="subcellular location">
    <subcellularLocation>
        <location evidence="1">Cytoplasm</location>
    </subcellularLocation>
</comment>
<comment type="similarity">
    <text evidence="1">Belongs to the UreD family.</text>
</comment>
<dbReference type="EMBL" id="AP009384">
    <property type="protein sequence ID" value="BAF87761.1"/>
    <property type="molecule type" value="Genomic_DNA"/>
</dbReference>
<dbReference type="SMR" id="A8I4R6"/>
<dbReference type="STRING" id="438753.AZC_1763"/>
<dbReference type="KEGG" id="azc:AZC_1763"/>
<dbReference type="eggNOG" id="COG0829">
    <property type="taxonomic scope" value="Bacteria"/>
</dbReference>
<dbReference type="HOGENOM" id="CLU_056339_2_0_5"/>
<dbReference type="Proteomes" id="UP000000270">
    <property type="component" value="Chromosome"/>
</dbReference>
<dbReference type="GO" id="GO:0005737">
    <property type="term" value="C:cytoplasm"/>
    <property type="evidence" value="ECO:0007669"/>
    <property type="project" value="UniProtKB-SubCell"/>
</dbReference>
<dbReference type="GO" id="GO:0016151">
    <property type="term" value="F:nickel cation binding"/>
    <property type="evidence" value="ECO:0007669"/>
    <property type="project" value="UniProtKB-UniRule"/>
</dbReference>
<dbReference type="HAMAP" id="MF_01384">
    <property type="entry name" value="UreD"/>
    <property type="match status" value="1"/>
</dbReference>
<dbReference type="InterPro" id="IPR002669">
    <property type="entry name" value="UreD"/>
</dbReference>
<dbReference type="PANTHER" id="PTHR33643">
    <property type="entry name" value="UREASE ACCESSORY PROTEIN D"/>
    <property type="match status" value="1"/>
</dbReference>
<dbReference type="PANTHER" id="PTHR33643:SF1">
    <property type="entry name" value="UREASE ACCESSORY PROTEIN D"/>
    <property type="match status" value="1"/>
</dbReference>
<dbReference type="Pfam" id="PF01774">
    <property type="entry name" value="UreD"/>
    <property type="match status" value="1"/>
</dbReference>
<accession>A8I4R6</accession>
<name>URED_AZOC5</name>
<evidence type="ECO:0000255" key="1">
    <source>
        <dbReference type="HAMAP-Rule" id="MF_01384"/>
    </source>
</evidence>
<proteinExistence type="inferred from homology"/>
<gene>
    <name evidence="1" type="primary">ureD</name>
    <name type="ordered locus">AZC_1763</name>
</gene>